<comment type="function">
    <text evidence="5 8">Cytochrome P450 monooxygenase; part of the gene cluster that mediates the biosynthesis of the dimeric xanthones cryptosporioptides (PubMed:30996871). The pathway begins with the synthesis of atrochrysone thioester by the polyketide synthase dmx-nrPKS (Probable). The atrochrysone carboxyl ACP thioesterase dmxR1 then breaks the thioester bond and releases the atrochrysone carboxylic acid from dmx-nrPKS (Probable). Atrochrysone carboxylic acid is decarboxylated by the decarboxylase dmxR15, and oxidized by the anthrone oxygenase dmxR16 to yield emodin (Probable). Emodin is then reduced to emodin hydroquinone by the oxidoreductase dmxR7 (Probable). A-ring reduction by the short chain dehydrogenase dmxR18, dehydration by the scytalone dehydratase-like protein dmxR17 and probable spontaneous re-oxidation, results in overall deoxygenation to chrysophanol (PubMed:30996871). Baeyer-Villiger oxidation by the Baeyer-Villiger monooxygenase (BVMO) dmxR6 then yields monodictylactone in equilibrium with monodictyphenone (PubMed:30996871). In the case of the cryptosporioptides biosynthesis, monodictylactone is reduced at C-12 to an alcohol (by the short chain dehydrogenases dmxR12 or dmxR8) and hydroxylated at C-5 by dmxR9, yielding the electron-rich aromatic which could eliminate H(2)O to form the ortho-quinonemethide, followed by tautomerisation to paraquinone and complete the formal reduction to produce the 10-methylgroup (Probable). Conjugate addition of C-4a-OH to the resulting paraquinone by the monooxygenase dmxR10 then gives cyclohexadienone, which is then reduced at C-5 by the short chain dehydrogenase dmxR3 to give the dihydroxanthone (Probable). The 6,7-epoxide in the cryptosporioptides could be introduced by the cytochrome P450 monooxygenase dmxL3 (Probable). The highly reducing PKS dmxL2 manufactures butyrate, which is further carboxylated by dmxL1 to form ethylmalonate (PubMed:30996871). It is not yet clear whether the carboxylation occurs while the butyrate is attached to the ACP of dmxL2, but this unusual fungal metabolite could then be esterified to O-5 by the O-acetyltransferase dmxR13 (PubMed:30996871). Finally, dimerization performed by dmxR5 gives the observed dimers cryptosporioptides A, B and C as the final products of the pathway (PubMed:30996871).</text>
</comment>
<comment type="cofactor">
    <cofactor evidence="1">
        <name>heme</name>
        <dbReference type="ChEBI" id="CHEBI:30413"/>
    </cofactor>
</comment>
<comment type="pathway">
    <text evidence="5">Secondary metabolite biosynthesis.</text>
</comment>
<comment type="subcellular location">
    <subcellularLocation>
        <location evidence="2">Membrane</location>
        <topology evidence="2">Single-pass membrane protein</topology>
    </subcellularLocation>
</comment>
<comment type="disruption phenotype">
    <text evidence="5">Abolished dimer production and leads to the accumulation of the monomer intermediate hemi-cryptosporioptide.</text>
</comment>
<comment type="similarity">
    <text evidence="7">Belongs to the cytochrome P450 family.</text>
</comment>
<organism>
    <name type="scientific">Cryptosporiopsis sp. (strain 8999)</name>
    <dbReference type="NCBI Taxonomy" id="2572248"/>
    <lineage>
        <taxon>Eukaryota</taxon>
        <taxon>Fungi</taxon>
        <taxon>Dikarya</taxon>
        <taxon>Ascomycota</taxon>
        <taxon>Pezizomycotina</taxon>
        <taxon>Leotiomycetes</taxon>
        <taxon>Helotiales</taxon>
        <taxon>Dermateaceae</taxon>
        <taxon>Cryptosporiopsis</taxon>
    </lineage>
</organism>
<accession>A0A4P8DJC8</accession>
<reference key="1">
    <citation type="journal article" date="2019" name="Chem. Sci.">
        <title>Structure revision of cryptosporioptides and determination of the genetic basis for dimeric xanthone biosynthesis in fungi.</title>
        <authorList>
            <person name="Greco C."/>
            <person name="de Mattos-Shipley K."/>
            <person name="Bailey A.M."/>
            <person name="Mulholland N.P."/>
            <person name="Vincent J.L."/>
            <person name="Willis C.L."/>
            <person name="Cox R.J."/>
            <person name="Simpson T.J."/>
        </authorList>
    </citation>
    <scope>NUCLEOTIDE SEQUENCE [GENOMIC DNA]</scope>
    <scope>FUNCTION</scope>
    <scope>DISRUPTION PHENOTYPE</scope>
    <scope>PATHWAY</scope>
    <source>
        <strain>8999</strain>
    </source>
</reference>
<gene>
    <name evidence="6" type="primary">dmxR5</name>
</gene>
<keyword id="KW-0325">Glycoprotein</keyword>
<keyword id="KW-0349">Heme</keyword>
<keyword id="KW-0408">Iron</keyword>
<keyword id="KW-0472">Membrane</keyword>
<keyword id="KW-0479">Metal-binding</keyword>
<keyword id="KW-0503">Monooxygenase</keyword>
<keyword id="KW-0560">Oxidoreductase</keyword>
<keyword id="KW-0812">Transmembrane</keyword>
<keyword id="KW-1133">Transmembrane helix</keyword>
<feature type="chain" id="PRO_0000453476" description="Cytochrome P450 monooxygenase dmxR5">
    <location>
        <begin position="1"/>
        <end position="508"/>
    </location>
</feature>
<feature type="transmembrane region" description="Helical" evidence="2">
    <location>
        <begin position="24"/>
        <end position="44"/>
    </location>
</feature>
<feature type="region of interest" description="Disordered" evidence="4">
    <location>
        <begin position="481"/>
        <end position="508"/>
    </location>
</feature>
<feature type="binding site" description="axial binding residue" evidence="1">
    <location>
        <position position="451"/>
    </location>
    <ligand>
        <name>heme</name>
        <dbReference type="ChEBI" id="CHEBI:30413"/>
    </ligand>
    <ligandPart>
        <name>Fe</name>
        <dbReference type="ChEBI" id="CHEBI:18248"/>
    </ligandPart>
</feature>
<feature type="glycosylation site" description="N-linked (GlcNAc...) asparagine" evidence="3">
    <location>
        <position position="387"/>
    </location>
</feature>
<feature type="glycosylation site" description="N-linked (GlcNAc...) asparagine" evidence="3">
    <location>
        <position position="405"/>
    </location>
</feature>
<feature type="glycosylation site" description="N-linked (GlcNAc...) asparagine" evidence="3">
    <location>
        <position position="462"/>
    </location>
</feature>
<protein>
    <recommendedName>
        <fullName evidence="6">Cytochrome P450 monooxygenase dmxR5</fullName>
        <ecNumber evidence="8">1.14.13.-</ecNumber>
    </recommendedName>
    <alternativeName>
        <fullName evidence="6">Dimeric xanthone biosynthesis cluster protein R5</fullName>
    </alternativeName>
</protein>
<dbReference type="EC" id="1.14.13.-" evidence="8"/>
<dbReference type="EMBL" id="MK182094">
    <property type="protein sequence ID" value="QCL09096.1"/>
    <property type="molecule type" value="Genomic_DNA"/>
</dbReference>
<dbReference type="SMR" id="A0A4P8DJC8"/>
<dbReference type="GlyCosmos" id="A0A4P8DJC8">
    <property type="glycosylation" value="3 sites, No reported glycans"/>
</dbReference>
<dbReference type="GO" id="GO:0016020">
    <property type="term" value="C:membrane"/>
    <property type="evidence" value="ECO:0007669"/>
    <property type="project" value="UniProtKB-SubCell"/>
</dbReference>
<dbReference type="GO" id="GO:0020037">
    <property type="term" value="F:heme binding"/>
    <property type="evidence" value="ECO:0007669"/>
    <property type="project" value="InterPro"/>
</dbReference>
<dbReference type="GO" id="GO:0005506">
    <property type="term" value="F:iron ion binding"/>
    <property type="evidence" value="ECO:0007669"/>
    <property type="project" value="InterPro"/>
</dbReference>
<dbReference type="GO" id="GO:0004497">
    <property type="term" value="F:monooxygenase activity"/>
    <property type="evidence" value="ECO:0007669"/>
    <property type="project" value="UniProtKB-KW"/>
</dbReference>
<dbReference type="GO" id="GO:0016705">
    <property type="term" value="F:oxidoreductase activity, acting on paired donors, with incorporation or reduction of molecular oxygen"/>
    <property type="evidence" value="ECO:0007669"/>
    <property type="project" value="InterPro"/>
</dbReference>
<dbReference type="GO" id="GO:0016125">
    <property type="term" value="P:sterol metabolic process"/>
    <property type="evidence" value="ECO:0007669"/>
    <property type="project" value="TreeGrafter"/>
</dbReference>
<dbReference type="CDD" id="cd00302">
    <property type="entry name" value="cytochrome_P450"/>
    <property type="match status" value="1"/>
</dbReference>
<dbReference type="Gene3D" id="1.10.630.10">
    <property type="entry name" value="Cytochrome P450"/>
    <property type="match status" value="1"/>
</dbReference>
<dbReference type="InterPro" id="IPR001128">
    <property type="entry name" value="Cyt_P450"/>
</dbReference>
<dbReference type="InterPro" id="IPR002403">
    <property type="entry name" value="Cyt_P450_E_grp-IV"/>
</dbReference>
<dbReference type="InterPro" id="IPR036396">
    <property type="entry name" value="Cyt_P450_sf"/>
</dbReference>
<dbReference type="PANTHER" id="PTHR24286">
    <property type="entry name" value="CYTOCHROME P450 26"/>
    <property type="match status" value="1"/>
</dbReference>
<dbReference type="PANTHER" id="PTHR24286:SF24">
    <property type="entry name" value="LANOSTEROL 14-ALPHA DEMETHYLASE"/>
    <property type="match status" value="1"/>
</dbReference>
<dbReference type="Pfam" id="PF00067">
    <property type="entry name" value="p450"/>
    <property type="match status" value="1"/>
</dbReference>
<dbReference type="PRINTS" id="PR00465">
    <property type="entry name" value="EP450IV"/>
</dbReference>
<dbReference type="SUPFAM" id="SSF48264">
    <property type="entry name" value="Cytochrome P450"/>
    <property type="match status" value="1"/>
</dbReference>
<evidence type="ECO:0000250" key="1">
    <source>
        <dbReference type="UniProtKB" id="P04798"/>
    </source>
</evidence>
<evidence type="ECO:0000255" key="2"/>
<evidence type="ECO:0000255" key="3">
    <source>
        <dbReference type="PROSITE-ProRule" id="PRU00498"/>
    </source>
</evidence>
<evidence type="ECO:0000256" key="4">
    <source>
        <dbReference type="SAM" id="MobiDB-lite"/>
    </source>
</evidence>
<evidence type="ECO:0000269" key="5">
    <source>
    </source>
</evidence>
<evidence type="ECO:0000303" key="6">
    <source>
    </source>
</evidence>
<evidence type="ECO:0000305" key="7"/>
<evidence type="ECO:0000305" key="8">
    <source>
    </source>
</evidence>
<sequence>MNSTPSAPPLKMEALDLDIFQPSLTLGLGAILVVLMSFLAFLSYTPSFDKKVPAFTTHTHPFIGAADFMWRKNHFWRASMEESKTGTFSFWVGKKHVVGLSGEAARKTFMDSPGLDFVGGARIRGVSLLPNPPTPEIFRPGFHHGRSFFLRRMIDMQKTEMLKRCLPRFTSDSRGVFDELAKDPSGITNPAVACWHVVFAHDVILFCSEEIVDDPKAFPNLLQMIDILQGLSSFTKVFLPWLPTMAGMTRARRYKYMKSIFEPLVDRRMKRGAIRREDSLQLMIDNGDRRDLIIDFVIAAVIIAPTNSRILTGQMLNVMAAYPSWQEKAYAEIKALAKSYAKDPEAPLADQLDSMPLEAWEAGFPSIDLCFKELVRMWVAISMMRRNISSRTDEFIPAGSFAIYNTTETHFSEELYPDPHTFKPERWLEGNANVQKQAYGFVGWGEGRHPCPGKRWAKLQLNITIAYALAKFKWTSVDKTEHKKSTQESGHGVPLPSKLSKFSPREEN</sequence>
<proteinExistence type="inferred from homology"/>
<name>DMXR5_CRYX8</name>